<dbReference type="EMBL" id="BC122589">
    <property type="protein sequence ID" value="AAI22590.1"/>
    <property type="molecule type" value="mRNA"/>
</dbReference>
<dbReference type="RefSeq" id="NP_001069591.1">
    <property type="nucleotide sequence ID" value="NM_001076123.2"/>
</dbReference>
<dbReference type="SMR" id="Q0IIL2"/>
<dbReference type="FunCoup" id="Q0IIL2">
    <property type="interactions" value="400"/>
</dbReference>
<dbReference type="STRING" id="9913.ENSBTAP00000025950"/>
<dbReference type="PaxDb" id="9913-ENSBTAP00000025950"/>
<dbReference type="Ensembl" id="ENSBTAT00000025950.6">
    <property type="protein sequence ID" value="ENSBTAP00000025950.4"/>
    <property type="gene ID" value="ENSBTAG00000019486.6"/>
</dbReference>
<dbReference type="Ensembl" id="ENSBTAT00000106435.1">
    <property type="protein sequence ID" value="ENSBTAP00000095763.1"/>
    <property type="gene ID" value="ENSBTAG00000019486.6"/>
</dbReference>
<dbReference type="Ensembl" id="ENSBTAT00000118845.1">
    <property type="protein sequence ID" value="ENSBTAP00000086403.1"/>
    <property type="gene ID" value="ENSBTAG00000019486.6"/>
</dbReference>
<dbReference type="Ensembl" id="ENSBTAT00000132992.1">
    <property type="protein sequence ID" value="ENSBTAP00000078934.1"/>
    <property type="gene ID" value="ENSBTAG00000019486.6"/>
</dbReference>
<dbReference type="GeneID" id="538709"/>
<dbReference type="KEGG" id="bta:538709"/>
<dbReference type="CTD" id="9069"/>
<dbReference type="VEuPathDB" id="HostDB:ENSBTAG00000019486"/>
<dbReference type="VGNC" id="VGNC:27404">
    <property type="gene designation" value="CLDN12"/>
</dbReference>
<dbReference type="eggNOG" id="ENOG502QR4G">
    <property type="taxonomic scope" value="Eukaryota"/>
</dbReference>
<dbReference type="GeneTree" id="ENSGT00400000022250"/>
<dbReference type="HOGENOM" id="CLU_063070_0_0_1"/>
<dbReference type="InParanoid" id="Q0IIL2"/>
<dbReference type="OMA" id="FYNTHLN"/>
<dbReference type="OrthoDB" id="3031595at2759"/>
<dbReference type="TreeFam" id="TF331972"/>
<dbReference type="Proteomes" id="UP000009136">
    <property type="component" value="Chromosome 2"/>
</dbReference>
<dbReference type="Bgee" id="ENSBTAG00000019486">
    <property type="expression patterns" value="Expressed in oocyte and 104 other cell types or tissues"/>
</dbReference>
<dbReference type="GO" id="GO:0005923">
    <property type="term" value="C:bicellular tight junction"/>
    <property type="evidence" value="ECO:0007669"/>
    <property type="project" value="UniProtKB-SubCell"/>
</dbReference>
<dbReference type="GO" id="GO:0005886">
    <property type="term" value="C:plasma membrane"/>
    <property type="evidence" value="ECO:0000318"/>
    <property type="project" value="GO_Central"/>
</dbReference>
<dbReference type="FunFam" id="1.20.140.150:FF:000017">
    <property type="entry name" value="Claudin-12 (Predicted)"/>
    <property type="match status" value="1"/>
</dbReference>
<dbReference type="Gene3D" id="1.20.140.150">
    <property type="match status" value="1"/>
</dbReference>
<dbReference type="InterPro" id="IPR013287">
    <property type="entry name" value="Claudin12"/>
</dbReference>
<dbReference type="InterPro" id="IPR017974">
    <property type="entry name" value="Claudin_CS"/>
</dbReference>
<dbReference type="PANTHER" id="PTHR16703">
    <property type="entry name" value="CLAUDIN-12"/>
    <property type="match status" value="1"/>
</dbReference>
<dbReference type="PANTHER" id="PTHR16703:SF3">
    <property type="entry name" value="CLAUDIN-12"/>
    <property type="match status" value="1"/>
</dbReference>
<dbReference type="PRINTS" id="PR01872">
    <property type="entry name" value="CLAUDIN12"/>
</dbReference>
<dbReference type="PROSITE" id="PS01346">
    <property type="entry name" value="CLAUDIN"/>
    <property type="match status" value="1"/>
</dbReference>
<accession>Q0IIL2</accession>
<keyword id="KW-0965">Cell junction</keyword>
<keyword id="KW-1003">Cell membrane</keyword>
<keyword id="KW-0472">Membrane</keyword>
<keyword id="KW-0597">Phosphoprotein</keyword>
<keyword id="KW-1185">Reference proteome</keyword>
<keyword id="KW-0796">Tight junction</keyword>
<keyword id="KW-0812">Transmembrane</keyword>
<keyword id="KW-1133">Transmembrane helix</keyword>
<feature type="chain" id="PRO_0000273421" description="Claudin-12">
    <location>
        <begin position="1"/>
        <end position="244"/>
    </location>
</feature>
<feature type="topological domain" description="Cytoplasmic" evidence="4">
    <location>
        <begin position="1"/>
        <end position="10"/>
    </location>
</feature>
<feature type="transmembrane region" description="Helical" evidence="4">
    <location>
        <begin position="11"/>
        <end position="31"/>
    </location>
</feature>
<feature type="topological domain" description="Extracellular" evidence="4">
    <location>
        <begin position="32"/>
        <end position="87"/>
    </location>
</feature>
<feature type="transmembrane region" description="Helical" evidence="4">
    <location>
        <begin position="88"/>
        <end position="108"/>
    </location>
</feature>
<feature type="topological domain" description="Cytoplasmic" evidence="4">
    <location>
        <begin position="109"/>
        <end position="135"/>
    </location>
</feature>
<feature type="transmembrane region" description="Helical" evidence="4">
    <location>
        <begin position="136"/>
        <end position="156"/>
    </location>
</feature>
<feature type="topological domain" description="Extracellular" evidence="4">
    <location>
        <begin position="157"/>
        <end position="174"/>
    </location>
</feature>
<feature type="transmembrane region" description="Helical" evidence="4">
    <location>
        <begin position="175"/>
        <end position="195"/>
    </location>
</feature>
<feature type="topological domain" description="Cytoplasmic" evidence="4">
    <location>
        <begin position="196"/>
        <end position="244"/>
    </location>
</feature>
<feature type="modified residue" description="Phosphoserine" evidence="2">
    <location>
        <position position="228"/>
    </location>
</feature>
<feature type="modified residue" description="Phosphoserine" evidence="2">
    <location>
        <position position="231"/>
    </location>
</feature>
<evidence type="ECO:0000250" key="1"/>
<evidence type="ECO:0000250" key="2">
    <source>
        <dbReference type="UniProtKB" id="P56749"/>
    </source>
</evidence>
<evidence type="ECO:0000250" key="3">
    <source>
        <dbReference type="UniProtKB" id="Q9ET43"/>
    </source>
</evidence>
<evidence type="ECO:0000255" key="4"/>
<evidence type="ECO:0000305" key="5"/>
<comment type="function">
    <text evidence="1">Plays a major role in tight junction-specific obliteration of the intercellular space, through calcium-independent cell-adhesion activity.</text>
</comment>
<comment type="subunit">
    <text evidence="2">Interacts with OCLN.</text>
</comment>
<comment type="subcellular location">
    <subcellularLocation>
        <location evidence="3">Cell junction</location>
        <location evidence="3">Tight junction</location>
    </subcellularLocation>
    <subcellularLocation>
        <location evidence="2">Cell membrane</location>
        <topology evidence="4">Multi-pass membrane protein</topology>
    </subcellularLocation>
</comment>
<comment type="similarity">
    <text evidence="5">Belongs to the claudin family.</text>
</comment>
<sequence length="244" mass="26951">MGCRDVHAATVLSFLCGIASVAGLFAGTLLPNWRKLRLITFNRNEKNLTVYTGLWVKCARYDGGNDCLMYDAAWYSSVDQLDLRVLQFALPLSILIAMGALLLCLIGMCNTAFRSSVPNIKLAKCLVNSAGCHLVAGLLFFLAGTVSLSPSIWVIFYNIHLNRKFEPVFAFDYAVYVTVASAGGLFMTALLLFIWYCACKSLPSPFWQPLYSHPPGMHTYSQPYSARSRLSAIEIDIPVVSHTT</sequence>
<proteinExistence type="evidence at transcript level"/>
<organism>
    <name type="scientific">Bos taurus</name>
    <name type="common">Bovine</name>
    <dbReference type="NCBI Taxonomy" id="9913"/>
    <lineage>
        <taxon>Eukaryota</taxon>
        <taxon>Metazoa</taxon>
        <taxon>Chordata</taxon>
        <taxon>Craniata</taxon>
        <taxon>Vertebrata</taxon>
        <taxon>Euteleostomi</taxon>
        <taxon>Mammalia</taxon>
        <taxon>Eutheria</taxon>
        <taxon>Laurasiatheria</taxon>
        <taxon>Artiodactyla</taxon>
        <taxon>Ruminantia</taxon>
        <taxon>Pecora</taxon>
        <taxon>Bovidae</taxon>
        <taxon>Bovinae</taxon>
        <taxon>Bos</taxon>
    </lineage>
</organism>
<gene>
    <name type="primary">CLDN12</name>
</gene>
<protein>
    <recommendedName>
        <fullName>Claudin-12</fullName>
    </recommendedName>
</protein>
<reference key="1">
    <citation type="submission" date="2006-08" db="EMBL/GenBank/DDBJ databases">
        <authorList>
            <consortium name="NIH - Mammalian Gene Collection (MGC) project"/>
        </authorList>
    </citation>
    <scope>NUCLEOTIDE SEQUENCE [LARGE SCALE MRNA]</scope>
    <source>
        <strain>Hereford</strain>
        <tissue>Thalamus</tissue>
    </source>
</reference>
<name>CLD12_BOVIN</name>